<accession>D3ZEY0</accession>
<keyword id="KW-0175">Coiled coil</keyword>
<keyword id="KW-0963">Cytoplasm</keyword>
<keyword id="KW-0206">Cytoskeleton</keyword>
<keyword id="KW-0393">Immunoglobulin domain</keyword>
<keyword id="KW-0597">Phosphoprotein</keyword>
<keyword id="KW-1185">Reference proteome</keyword>
<keyword id="KW-0832">Ubl conjugation</keyword>
<feature type="chain" id="PRO_0000458903" description="Coiled-coil domain-containing protein 141">
    <location>
        <begin position="1"/>
        <end position="1530"/>
    </location>
</feature>
<feature type="repeat" description="Spectrin" evidence="2">
    <location>
        <begin position="49"/>
        <end position="127"/>
    </location>
</feature>
<feature type="domain" description="Ig-like" evidence="3">
    <location>
        <begin position="1409"/>
        <end position="1497"/>
    </location>
</feature>
<feature type="region of interest" description="Disordered" evidence="4">
    <location>
        <begin position="1153"/>
        <end position="1240"/>
    </location>
</feature>
<feature type="region of interest" description="Disordered" evidence="4">
    <location>
        <begin position="1259"/>
        <end position="1285"/>
    </location>
</feature>
<feature type="region of interest" description="Disordered" evidence="4">
    <location>
        <begin position="1324"/>
        <end position="1356"/>
    </location>
</feature>
<feature type="region of interest" description="Disordered" evidence="4">
    <location>
        <begin position="1369"/>
        <end position="1403"/>
    </location>
</feature>
<feature type="coiled-coil region" evidence="2">
    <location>
        <begin position="220"/>
        <end position="251"/>
    </location>
</feature>
<feature type="coiled-coil region" evidence="2">
    <location>
        <begin position="758"/>
        <end position="785"/>
    </location>
</feature>
<feature type="coiled-coil region" evidence="2">
    <location>
        <begin position="865"/>
        <end position="967"/>
    </location>
</feature>
<feature type="compositionally biased region" description="Polar residues" evidence="4">
    <location>
        <begin position="1334"/>
        <end position="1345"/>
    </location>
</feature>
<feature type="modified residue" description="Phosphothreonine" evidence="1">
    <location>
        <position position="91"/>
    </location>
</feature>
<reference key="1">
    <citation type="journal article" date="2004" name="Nature">
        <title>Genome sequence of the Brown Norway rat yields insights into mammalian evolution.</title>
        <authorList>
            <person name="Gibbs R.A."/>
            <person name="Weinstock G.M."/>
            <person name="Metzker M.L."/>
            <person name="Muzny D.M."/>
            <person name="Sodergren E.J."/>
            <person name="Scherer S."/>
            <person name="Scott G."/>
            <person name="Steffen D."/>
            <person name="Worley K.C."/>
            <person name="Burch P.E."/>
            <person name="Okwuonu G."/>
            <person name="Hines S."/>
            <person name="Lewis L."/>
            <person name="Deramo C."/>
            <person name="Delgado O."/>
            <person name="Dugan-Rocha S."/>
            <person name="Miner G."/>
            <person name="Morgan M."/>
            <person name="Hawes A."/>
            <person name="Gill R."/>
            <person name="Holt R.A."/>
            <person name="Adams M.D."/>
            <person name="Amanatides P.G."/>
            <person name="Baden-Tillson H."/>
            <person name="Barnstead M."/>
            <person name="Chin S."/>
            <person name="Evans C.A."/>
            <person name="Ferriera S."/>
            <person name="Fosler C."/>
            <person name="Glodek A."/>
            <person name="Gu Z."/>
            <person name="Jennings D."/>
            <person name="Kraft C.L."/>
            <person name="Nguyen T."/>
            <person name="Pfannkoch C.M."/>
            <person name="Sitter C."/>
            <person name="Sutton G.G."/>
            <person name="Venter J.C."/>
            <person name="Woodage T."/>
            <person name="Smith D."/>
            <person name="Lee H.-M."/>
            <person name="Gustafson E."/>
            <person name="Cahill P."/>
            <person name="Kana A."/>
            <person name="Doucette-Stamm L."/>
            <person name="Weinstock K."/>
            <person name="Fechtel K."/>
            <person name="Weiss R.B."/>
            <person name="Dunn D.M."/>
            <person name="Green E.D."/>
            <person name="Blakesley R.W."/>
            <person name="Bouffard G.G."/>
            <person name="De Jong P.J."/>
            <person name="Osoegawa K."/>
            <person name="Zhu B."/>
            <person name="Marra M."/>
            <person name="Schein J."/>
            <person name="Bosdet I."/>
            <person name="Fjell C."/>
            <person name="Jones S."/>
            <person name="Krzywinski M."/>
            <person name="Mathewson C."/>
            <person name="Siddiqui A."/>
            <person name="Wye N."/>
            <person name="McPherson J."/>
            <person name="Zhao S."/>
            <person name="Fraser C.M."/>
            <person name="Shetty J."/>
            <person name="Shatsman S."/>
            <person name="Geer K."/>
            <person name="Chen Y."/>
            <person name="Abramzon S."/>
            <person name="Nierman W.C."/>
            <person name="Havlak P.H."/>
            <person name="Chen R."/>
            <person name="Durbin K.J."/>
            <person name="Egan A."/>
            <person name="Ren Y."/>
            <person name="Song X.-Z."/>
            <person name="Li B."/>
            <person name="Liu Y."/>
            <person name="Qin X."/>
            <person name="Cawley S."/>
            <person name="Cooney A.J."/>
            <person name="D'Souza L.M."/>
            <person name="Martin K."/>
            <person name="Wu J.Q."/>
            <person name="Gonzalez-Garay M.L."/>
            <person name="Jackson A.R."/>
            <person name="Kalafus K.J."/>
            <person name="McLeod M.P."/>
            <person name="Milosavljevic A."/>
            <person name="Virk D."/>
            <person name="Volkov A."/>
            <person name="Wheeler D.A."/>
            <person name="Zhang Z."/>
            <person name="Bailey J.A."/>
            <person name="Eichler E.E."/>
            <person name="Tuzun E."/>
            <person name="Birney E."/>
            <person name="Mongin E."/>
            <person name="Ureta-Vidal A."/>
            <person name="Woodwark C."/>
            <person name="Zdobnov E."/>
            <person name="Bork P."/>
            <person name="Suyama M."/>
            <person name="Torrents D."/>
            <person name="Alexandersson M."/>
            <person name="Trask B.J."/>
            <person name="Young J.M."/>
            <person name="Huang H."/>
            <person name="Wang H."/>
            <person name="Xing H."/>
            <person name="Daniels S."/>
            <person name="Gietzen D."/>
            <person name="Schmidt J."/>
            <person name="Stevens K."/>
            <person name="Vitt U."/>
            <person name="Wingrove J."/>
            <person name="Camara F."/>
            <person name="Mar Alba M."/>
            <person name="Abril J.F."/>
            <person name="Guigo R."/>
            <person name="Smit A."/>
            <person name="Dubchak I."/>
            <person name="Rubin E.M."/>
            <person name="Couronne O."/>
            <person name="Poliakov A."/>
            <person name="Huebner N."/>
            <person name="Ganten D."/>
            <person name="Goesele C."/>
            <person name="Hummel O."/>
            <person name="Kreitler T."/>
            <person name="Lee Y.-A."/>
            <person name="Monti J."/>
            <person name="Schulz H."/>
            <person name="Zimdahl H."/>
            <person name="Himmelbauer H."/>
            <person name="Lehrach H."/>
            <person name="Jacob H.J."/>
            <person name="Bromberg S."/>
            <person name="Gullings-Handley J."/>
            <person name="Jensen-Seaman M.I."/>
            <person name="Kwitek A.E."/>
            <person name="Lazar J."/>
            <person name="Pasko D."/>
            <person name="Tonellato P.J."/>
            <person name="Twigger S."/>
            <person name="Ponting C.P."/>
            <person name="Duarte J.M."/>
            <person name="Rice S."/>
            <person name="Goodstadt L."/>
            <person name="Beatson S.A."/>
            <person name="Emes R.D."/>
            <person name="Winter E.E."/>
            <person name="Webber C."/>
            <person name="Brandt P."/>
            <person name="Nyakatura G."/>
            <person name="Adetobi M."/>
            <person name="Chiaromonte F."/>
            <person name="Elnitski L."/>
            <person name="Eswara P."/>
            <person name="Hardison R.C."/>
            <person name="Hou M."/>
            <person name="Kolbe D."/>
            <person name="Makova K."/>
            <person name="Miller W."/>
            <person name="Nekrutenko A."/>
            <person name="Riemer C."/>
            <person name="Schwartz S."/>
            <person name="Taylor J."/>
            <person name="Yang S."/>
            <person name="Zhang Y."/>
            <person name="Lindpaintner K."/>
            <person name="Andrews T.D."/>
            <person name="Caccamo M."/>
            <person name="Clamp M."/>
            <person name="Clarke L."/>
            <person name="Curwen V."/>
            <person name="Durbin R.M."/>
            <person name="Eyras E."/>
            <person name="Searle S.M."/>
            <person name="Cooper G.M."/>
            <person name="Batzoglou S."/>
            <person name="Brudno M."/>
            <person name="Sidow A."/>
            <person name="Stone E.A."/>
            <person name="Payseur B.A."/>
            <person name="Bourque G."/>
            <person name="Lopez-Otin C."/>
            <person name="Puente X.S."/>
            <person name="Chakrabarti K."/>
            <person name="Chatterji S."/>
            <person name="Dewey C."/>
            <person name="Pachter L."/>
            <person name="Bray N."/>
            <person name="Yap V.B."/>
            <person name="Caspi A."/>
            <person name="Tesler G."/>
            <person name="Pevzner P.A."/>
            <person name="Haussler D."/>
            <person name="Roskin K.M."/>
            <person name="Baertsch R."/>
            <person name="Clawson H."/>
            <person name="Furey T.S."/>
            <person name="Hinrichs A.S."/>
            <person name="Karolchik D."/>
            <person name="Kent W.J."/>
            <person name="Rosenbloom K.R."/>
            <person name="Trumbower H."/>
            <person name="Weirauch M."/>
            <person name="Cooper D.N."/>
            <person name="Stenson P.D."/>
            <person name="Ma B."/>
            <person name="Brent M."/>
            <person name="Arumugam M."/>
            <person name="Shteynberg D."/>
            <person name="Copley R.R."/>
            <person name="Taylor M.S."/>
            <person name="Riethman H."/>
            <person name="Mudunuri U."/>
            <person name="Peterson J."/>
            <person name="Guyer M."/>
            <person name="Felsenfeld A."/>
            <person name="Old S."/>
            <person name="Mockrin S."/>
            <person name="Collins F.S."/>
        </authorList>
    </citation>
    <scope>NUCLEOTIDE SEQUENCE [LARGE SCALE GENOMIC DNA]</scope>
    <source>
        <strain>Brown Norway</strain>
    </source>
</reference>
<reference key="2">
    <citation type="journal article" date="2012" name="Nat. Commun.">
        <title>Quantitative maps of protein phosphorylation sites across 14 different rat organs and tissues.</title>
        <authorList>
            <person name="Lundby A."/>
            <person name="Secher A."/>
            <person name="Lage K."/>
            <person name="Nordsborg N.B."/>
            <person name="Dmytriyev A."/>
            <person name="Lundby C."/>
            <person name="Olsen J.V."/>
        </authorList>
    </citation>
    <scope>IDENTIFICATION BY MASS SPECTROMETRY [LARGE SCALE ANALYSIS]</scope>
</reference>
<reference key="3">
    <citation type="journal article" date="2016" name="EMBO Rep.">
        <title>Rescue of CAMDI deletion-induced delayed radial migration and psychiatric behaviors by HDAC6 inhibitor.</title>
        <authorList>
            <person name="Fukuda T."/>
            <person name="Nagashima S."/>
            <person name="Abe T."/>
            <person name="Kiyonari H."/>
            <person name="Inatome R."/>
            <person name="Yanagi S."/>
        </authorList>
    </citation>
    <scope>FUNCTION</scope>
    <scope>INTERACTION WITH HDAC6</scope>
</reference>
<organism>
    <name type="scientific">Rattus norvegicus</name>
    <name type="common">Rat</name>
    <dbReference type="NCBI Taxonomy" id="10116"/>
    <lineage>
        <taxon>Eukaryota</taxon>
        <taxon>Metazoa</taxon>
        <taxon>Chordata</taxon>
        <taxon>Craniata</taxon>
        <taxon>Vertebrata</taxon>
        <taxon>Euteleostomi</taxon>
        <taxon>Mammalia</taxon>
        <taxon>Eutheria</taxon>
        <taxon>Euarchontoglires</taxon>
        <taxon>Glires</taxon>
        <taxon>Rodentia</taxon>
        <taxon>Myomorpha</taxon>
        <taxon>Muroidea</taxon>
        <taxon>Muridae</taxon>
        <taxon>Murinae</taxon>
        <taxon>Rattus</taxon>
    </lineage>
</organism>
<protein>
    <recommendedName>
        <fullName>Coiled-coil domain-containing protein 141</fullName>
    </recommendedName>
    <alternativeName>
        <fullName>Coiled-coil protein associated with myosin II and DISC1</fullName>
    </alternativeName>
</protein>
<name>CC141_RAT</name>
<evidence type="ECO:0000250" key="1">
    <source>
        <dbReference type="UniProtKB" id="E9Q8Q6"/>
    </source>
</evidence>
<evidence type="ECO:0000255" key="2"/>
<evidence type="ECO:0000255" key="3">
    <source>
        <dbReference type="PROSITE-ProRule" id="PRU00114"/>
    </source>
</evidence>
<evidence type="ECO:0000256" key="4">
    <source>
        <dbReference type="SAM" id="MobiDB-lite"/>
    </source>
</evidence>
<evidence type="ECO:0000269" key="5">
    <source>
    </source>
</evidence>
<evidence type="ECO:0000312" key="6">
    <source>
        <dbReference type="RGD" id="1593250"/>
    </source>
</evidence>
<gene>
    <name evidence="6" type="primary">Ccdc141</name>
    <name type="synonym">CAMDI</name>
</gene>
<proteinExistence type="evidence at protein level"/>
<comment type="function">
    <text evidence="1">Plays a critical role in cortical radial and GnRH neurons migration during brain development. Regulates cortical radial migration by negatively controlling the activity of histone deacetylase 6 (HDAC6) and promotes centrosome maturation. CAMDI is required for dilation formation of cortical neurons during radial migration. Plays a critical role in learning and memory performance through regulation of AMPA-selective glutamate receptors (AMPARs) cell surface expression in competition with KIBRA.</text>
</comment>
<comment type="subunit">
    <text evidence="1 5">Interacts with DISC1. Interacts preferentially with phosphorylated forms of myosin regulatory light chain (MRLC) (By similarity). Interacts (via the N-terminal region) with HDAC6; inhibits the deacetylase activity of HDAC6 (PubMed:27737934). Interacts with KIBRA (via the C-terminal region); retains AMPAR in the cytosol after internalization (By similarity).</text>
</comment>
<comment type="interaction">
    <interactant intactId="EBI-21448776">
        <id>D3ZEY0</id>
    </interactant>
    <interactant intactId="EBI-1009256">
        <id>Q9Z2V5</id>
        <label>Hdac6</label>
    </interactant>
    <organismsDiffer>true</organismsDiffer>
    <experiments>3</experiments>
</comment>
<comment type="subcellular location">
    <subcellularLocation>
        <location evidence="1">Cytoplasm</location>
    </subcellularLocation>
    <subcellularLocation>
        <location evidence="1">Cytoplasm</location>
        <location evidence="1">Cytoskeleton</location>
        <location evidence="1">Microtubule organizing center</location>
        <location evidence="1">Centrosome</location>
    </subcellularLocation>
    <text evidence="1">Co-localized with DISC1 at/around the centrosome. Localizes to the centrosome, at least in part, in a DISC1-dependent manner. Accumulates and oscillates at the dilation in cortical neurons during migration. CAMDI protein level is stabilized at the G1 phase and destabilized at the G2 /M phase.</text>
</comment>
<comment type="PTM">
    <text evidence="1">Ubiquitinated and degradated by the CDC20-APC/C pathway. During brain development, CDC20-APC/C complex degrades CCDC141 after centrosome translocation into the dilated area. CCDC141 is restabilized in the dilation until the centrosome enters the dilation, at which point it is once again immediately destabilized by CDC20-APC/C complex. The oscillatory regulation of CCDC141 protein is needed for proper cortical migration.</text>
</comment>
<comment type="PTM">
    <text evidence="1">Phosphorylation at Thr-91 by PLK1 affects CCDC141 degradation.</text>
</comment>
<sequence>MSCKESPHVGVSTTTVSSVAVQAGDSKIVIAVVKCGKWVRLQLAEAQPNLLEIGSSQDETRKLLHDHELLLAKLKALEDRVWGLLQEADRTAEANKEQSEVYDAMAQTLGEAWATLVSMLERRRELLGLTSEFFQSALEFAIKIDQAEDFLQNPHEFESAEALQSLLLLHDRHAKELLERSLVLLNKSQQLTDFIEKFKCDGSPVNSELIQGAQSSCLKIDSLLELLQDRRRQLDKHLQQQRQELSQVLQLCLWDQQESQVSCWFQKTIRDLQEQSLGSSLSDNKELIRKHEDLTIKAKEWDLAMEKLKSQALGILLSKDLTEKEHLQLSNQKLNRLQEEFGRLMVDRKAWLTMAHDFFTSANEAFDVLGKVEDYLKLLKSEGLSLPALAAKHEELHREIKDSTAAALQKGRTLISQVDSCRAQVTGIHETMGRIQKRVDRLSQQCTAHQEFALKKQQLATSVDDYLRKVEMSVQEMRLVLATTLDVGSSPSESEKILNKYLELDIQAKETAHALEAAAKITTEKNELELNEVALLPFKVKRLEEELSTLSRSVSYRSQVLQTYIAFRKSSEEVEEQLQSLKEFYLTESPWEDEDDAVVTCQSNSAERKWQLFLKKSFLTQDLSLEFLNLISMAKENEILNVKKEMHIVENVMEKQTNGREELSRLRMAWHLKAMEGKPVKERWETFKEKLKKTTHNVKLLHEVLMPVSALDLGGNLQSMSDLRRRWIAMQPQLQQLHEDVQQIMKEWEVLSGQGVPLKEKAEQLKDLIHLHQRQRERIQEYEEILYKTVQFHQVKEELTHLIKPRELELLAQPMELEGSKEVLMQLGRSQGRRAHVDHLHRLALSLGVDIISSVQRPNCSNISAKSLQQQLEALELDSRDWSAKAKEYEQVLACSLEYCTTREEINELKESFKDIKKKFNNLKFNYSKKNEKSRNLKTLQYQIQQVETYADKIQALRKKMEKVNKKISDSVLSYPSNKANTLVEAMEDLKKHVDDFDKVVTDYKMNLDLTEHLQEVIEECNFWYEDASATVVRVGKYSMECQTREAVDILHRQFQKFVTPSVPQQEERIQEVVSLAQRLYGLEEGQKYAEKIVTRHKEILESITELCGSLVELKEKLMQGDVPKVNSNLEDFHGNSIDLLKEPGRDEQTTFSEERSEGQAQGADVSAINGTREDGLPVGLRQSFDKEDSAQGLTLPEDTLSGEDSECISSDDISLPPLPVTPESPLAPSDMEVEEPASSSALALHISGYRMRTGTGGLGKAPESVLPPPTAFTDGYHNKKDTFTSHFERPYPQFKAEPLLTSRGSGEMSTKLHVNVKCPARMPREVHDKALPPSSQAQEISLGTQEKVHADSNVTKTQDRLHAALDVSPGLSSQSDTSRSHQRQVGPQGDRKNSSAEKSVVSLAGQAPHFSRLLSNVTVTEGSPVTLEVEVTGFPEPTLTWFKKGQKLCADGHLQVLHKDTKHSVFIPKVCEADAGLYVAQAQNSSGTLSSKAILHVTGNHGPPITRINWIVLCIIYVSVSVIYWLLTQ</sequence>
<dbReference type="EMBL" id="AABR07052587">
    <property type="status" value="NOT_ANNOTATED_CDS"/>
    <property type="molecule type" value="Genomic_DNA"/>
</dbReference>
<dbReference type="RefSeq" id="NP_001417323.1">
    <property type="nucleotide sequence ID" value="NM_001430394.1"/>
</dbReference>
<dbReference type="RefSeq" id="XP_003749542.2">
    <property type="nucleotide sequence ID" value="XM_003749494.6"/>
</dbReference>
<dbReference type="SMR" id="D3ZEY0"/>
<dbReference type="FunCoup" id="D3ZEY0">
    <property type="interactions" value="49"/>
</dbReference>
<dbReference type="IntAct" id="D3ZEY0">
    <property type="interactions" value="1"/>
</dbReference>
<dbReference type="STRING" id="10116.ENSRNOP00000036469"/>
<dbReference type="GlyGen" id="D3ZEY0">
    <property type="glycosylation" value="1 site"/>
</dbReference>
<dbReference type="iPTMnet" id="D3ZEY0"/>
<dbReference type="PhosphoSitePlus" id="D3ZEY0"/>
<dbReference type="PaxDb" id="10116-ENSRNOP00000036469"/>
<dbReference type="PeptideAtlas" id="D3ZEY0"/>
<dbReference type="Ensembl" id="ENSRNOT00000037015.7">
    <property type="protein sequence ID" value="ENSRNOP00000036469.5"/>
    <property type="gene ID" value="ENSRNOG00000012580.8"/>
</dbReference>
<dbReference type="GeneID" id="311134"/>
<dbReference type="KEGG" id="rno:311134"/>
<dbReference type="AGR" id="RGD:1593250"/>
<dbReference type="CTD" id="285025"/>
<dbReference type="RGD" id="1593250">
    <property type="gene designation" value="Ccdc141"/>
</dbReference>
<dbReference type="eggNOG" id="KOG4240">
    <property type="taxonomic scope" value="Eukaryota"/>
</dbReference>
<dbReference type="GeneTree" id="ENSGT00440000038972"/>
<dbReference type="HOGENOM" id="CLU_251402_0_0_1"/>
<dbReference type="InParanoid" id="D3ZEY0"/>
<dbReference type="OMA" id="DAKAKPC"/>
<dbReference type="OrthoDB" id="60056at9989"/>
<dbReference type="TreeFam" id="TF331580"/>
<dbReference type="PRO" id="PR:D3ZEY0"/>
<dbReference type="Proteomes" id="UP000002494">
    <property type="component" value="Chromosome 3"/>
</dbReference>
<dbReference type="Bgee" id="ENSRNOG00000012580">
    <property type="expression patterns" value="Expressed in heart and 17 other cell types or tissues"/>
</dbReference>
<dbReference type="GO" id="GO:0005813">
    <property type="term" value="C:centrosome"/>
    <property type="evidence" value="ECO:0000266"/>
    <property type="project" value="RGD"/>
</dbReference>
<dbReference type="GO" id="GO:0005737">
    <property type="term" value="C:cytoplasm"/>
    <property type="evidence" value="ECO:0000266"/>
    <property type="project" value="RGD"/>
</dbReference>
<dbReference type="GO" id="GO:0007420">
    <property type="term" value="P:brain development"/>
    <property type="evidence" value="ECO:0000266"/>
    <property type="project" value="RGD"/>
</dbReference>
<dbReference type="GO" id="GO:0051642">
    <property type="term" value="P:centrosome localization"/>
    <property type="evidence" value="ECO:0000266"/>
    <property type="project" value="RGD"/>
</dbReference>
<dbReference type="GO" id="GO:0021799">
    <property type="term" value="P:cerebral cortex radially oriented cell migration"/>
    <property type="evidence" value="ECO:0000266"/>
    <property type="project" value="RGD"/>
</dbReference>
<dbReference type="CDD" id="cd00176">
    <property type="entry name" value="SPEC"/>
    <property type="match status" value="1"/>
</dbReference>
<dbReference type="FunFam" id="1.20.58.60:FF:000184">
    <property type="entry name" value="Coiled-coil domain containing 141"/>
    <property type="match status" value="1"/>
</dbReference>
<dbReference type="FunFam" id="2.60.40.10:FF:002369">
    <property type="entry name" value="Coiled-coil domain-containing 141"/>
    <property type="match status" value="1"/>
</dbReference>
<dbReference type="FunFam" id="1.20.58.60:FF:000192">
    <property type="entry name" value="coiled-coil domain-containing protein 141 isoform X2"/>
    <property type="match status" value="1"/>
</dbReference>
<dbReference type="Gene3D" id="1.20.58.60">
    <property type="match status" value="3"/>
</dbReference>
<dbReference type="Gene3D" id="2.60.40.10">
    <property type="entry name" value="Immunoglobulins"/>
    <property type="match status" value="1"/>
</dbReference>
<dbReference type="InterPro" id="IPR007110">
    <property type="entry name" value="Ig-like_dom"/>
</dbReference>
<dbReference type="InterPro" id="IPR036179">
    <property type="entry name" value="Ig-like_dom_sf"/>
</dbReference>
<dbReference type="InterPro" id="IPR013783">
    <property type="entry name" value="Ig-like_fold"/>
</dbReference>
<dbReference type="InterPro" id="IPR013098">
    <property type="entry name" value="Ig_I-set"/>
</dbReference>
<dbReference type="InterPro" id="IPR003599">
    <property type="entry name" value="Ig_sub"/>
</dbReference>
<dbReference type="InterPro" id="IPR003598">
    <property type="entry name" value="Ig_sub2"/>
</dbReference>
<dbReference type="InterPro" id="IPR050876">
    <property type="entry name" value="IgLON_domain"/>
</dbReference>
<dbReference type="InterPro" id="IPR018159">
    <property type="entry name" value="Spectrin/alpha-actinin"/>
</dbReference>
<dbReference type="InterPro" id="IPR002017">
    <property type="entry name" value="Spectrin_repeat"/>
</dbReference>
<dbReference type="PANTHER" id="PTHR42757:SF44">
    <property type="entry name" value="COILED-COIL DOMAIN-CONTAINING PROTEIN 141"/>
    <property type="match status" value="1"/>
</dbReference>
<dbReference type="PANTHER" id="PTHR42757">
    <property type="entry name" value="IGLON FAMILY OF IMMUNOGLOBULIN SUPERFAMILY-RELATED"/>
    <property type="match status" value="1"/>
</dbReference>
<dbReference type="Pfam" id="PF07679">
    <property type="entry name" value="I-set"/>
    <property type="match status" value="1"/>
</dbReference>
<dbReference type="Pfam" id="PF00435">
    <property type="entry name" value="Spectrin"/>
    <property type="match status" value="1"/>
</dbReference>
<dbReference type="SMART" id="SM00409">
    <property type="entry name" value="IG"/>
    <property type="match status" value="1"/>
</dbReference>
<dbReference type="SMART" id="SM00408">
    <property type="entry name" value="IGc2"/>
    <property type="match status" value="1"/>
</dbReference>
<dbReference type="SMART" id="SM00150">
    <property type="entry name" value="SPEC"/>
    <property type="match status" value="3"/>
</dbReference>
<dbReference type="SUPFAM" id="SSF48726">
    <property type="entry name" value="Immunoglobulin"/>
    <property type="match status" value="1"/>
</dbReference>
<dbReference type="SUPFAM" id="SSF46966">
    <property type="entry name" value="Spectrin repeat"/>
    <property type="match status" value="2"/>
</dbReference>
<dbReference type="PROSITE" id="PS50835">
    <property type="entry name" value="IG_LIKE"/>
    <property type="match status" value="1"/>
</dbReference>